<reference key="1">
    <citation type="journal article" date="2012" name="J. Bacteriol.">
        <title>Genome sequence of Paenibacillus alvei DSM 29, a secondary invader during European foulbrood outbreaks.</title>
        <authorList>
            <person name="Djukic M."/>
            <person name="Becker D."/>
            <person name="Poehlein A."/>
            <person name="Voget S."/>
            <person name="Daniel R."/>
        </authorList>
    </citation>
    <scope>NUCLEOTIDE SEQUENCE [LARGE SCALE GENOMIC DNA]</scope>
    <source>
        <strain>ATCC 6344 / DSM 29 / NBRC 3343 / NCIMB 9371 / NCTC 6352</strain>
    </source>
</reference>
<reference evidence="9" key="2">
    <citation type="journal article" date="2018" name="J. Biol. Chem.">
        <title>Discovery of a new Pro-Pro endopeptidase, PPEP-2, provides mechanistic insights into the differences in substrate specificity within the PPEP family.</title>
        <authorList>
            <person name="Klychnikov O.I."/>
            <person name="Shamorkina T.M."/>
            <person name="Weeks S.D."/>
            <person name="van Leeuwen H.C."/>
            <person name="Corver J."/>
            <person name="Drijfhout J.W."/>
            <person name="van Veelen P.A."/>
            <person name="Sluchanko N.N."/>
            <person name="Strelkov S.V."/>
            <person name="Hensbergen P.J."/>
        </authorList>
    </citation>
    <scope>X-RAY CRYSTALLOGRAPHY (1.75 ANGSTROMS) OF 28-217</scope>
    <scope>FUNCTION</scope>
    <scope>CATALYTIC ACTIVITY</scope>
    <scope>SUBSTRATE SPECIFICITY</scope>
    <scope>CLEAVAGE MOTIF</scope>
    <scope>COFACTOR</scope>
    <scope>SUBCELLULAR LOCATION</scope>
    <scope>SUBUNIT</scope>
    <scope>IDENTIFICATION BY MASS SPECTROMETRY</scope>
    <scope>MUTAGENESIS OF 112-SER--VAL-115</scope>
    <source>
        <strain>ATCC 6344 / DSM 29 / NBRC 3343 / NCIMB 9371 / NCTC 6352</strain>
    </source>
</reference>
<sequence>MKWDKRVVALILAVMIVCPLFAAPAHAQEQSILDKLVVLPSGEYNHSEAAAMKQRLEKIPTSILDALYSKGVKIKLTQGAITNEPELAYLKGVVPRGWEGTGLTWDDVPGVSERVVAVRIGYSEKGKGHNSLNLEIHETLHAVDRLVLNEVSGTDEFINIFNKEASVKYKGDGYVSAYPTEYFAEAASLYLYSDATRSDLKDSMPLTYEFMAKLFAN</sequence>
<accession>K4ZRC1</accession>
<name>PPEP2_PAEA2</name>
<evidence type="ECO:0000250" key="1">
    <source>
        <dbReference type="UniProtKB" id="Q183R7"/>
    </source>
</evidence>
<evidence type="ECO:0000255" key="2"/>
<evidence type="ECO:0000255" key="3">
    <source>
        <dbReference type="PROSITE-ProRule" id="PRU01339"/>
    </source>
</evidence>
<evidence type="ECO:0000269" key="4">
    <source>
    </source>
</evidence>
<evidence type="ECO:0000303" key="5">
    <source>
    </source>
</evidence>
<evidence type="ECO:0000305" key="6"/>
<evidence type="ECO:0000305" key="7">
    <source>
    </source>
</evidence>
<evidence type="ECO:0000312" key="8">
    <source>
        <dbReference type="EMBL" id="EJW19796.1"/>
    </source>
</evidence>
<evidence type="ECO:0007744" key="9">
    <source>
        <dbReference type="PDB" id="6FPC"/>
    </source>
</evidence>
<evidence type="ECO:0007829" key="10">
    <source>
        <dbReference type="PDB" id="6FPC"/>
    </source>
</evidence>
<feature type="signal peptide" evidence="2 7">
    <location>
        <begin position="1"/>
        <end position="27"/>
    </location>
</feature>
<feature type="chain" id="PRO_5003881148" description="Pro-Pro endopeptidase">
    <location>
        <begin position="28"/>
        <end position="217"/>
    </location>
</feature>
<feature type="domain" description="ATLF-like" evidence="3">
    <location>
        <begin position="30"/>
        <end position="216"/>
    </location>
</feature>
<feature type="region of interest" description="Plays a crucial role in substrate specificity" evidence="4">
    <location>
        <begin position="112"/>
        <end position="115"/>
    </location>
</feature>
<feature type="active site" description="Proton acceptor" evidence="3">
    <location>
        <position position="138"/>
    </location>
</feature>
<feature type="binding site" evidence="3 4">
    <location>
        <position position="137"/>
    </location>
    <ligand>
        <name>Zn(2+)</name>
        <dbReference type="ChEBI" id="CHEBI:29105"/>
        <note>catalytic</note>
    </ligand>
</feature>
<feature type="binding site" evidence="3 4">
    <location>
        <position position="141"/>
    </location>
    <ligand>
        <name>Zn(2+)</name>
        <dbReference type="ChEBI" id="CHEBI:29105"/>
        <note>catalytic</note>
    </ligand>
</feature>
<feature type="binding site" evidence="3 4">
    <location>
        <position position="174"/>
    </location>
    <ligand>
        <name>Zn(2+)</name>
        <dbReference type="ChEBI" id="CHEBI:29105"/>
        <note>catalytic</note>
    </ligand>
</feature>
<feature type="binding site" evidence="3 4">
    <location>
        <position position="181"/>
    </location>
    <ligand>
        <name>Zn(2+)</name>
        <dbReference type="ChEBI" id="CHEBI:29105"/>
        <note>catalytic</note>
    </ligand>
</feature>
<feature type="site" description="Transition state stabilizer" evidence="1">
    <location>
        <position position="174"/>
    </location>
</feature>
<feature type="mutagenesis site" description="Displays a shift in substrate specificity toward PPEP-1 substrates." evidence="4">
    <original>SERV</original>
    <variation>GGST</variation>
    <location>
        <begin position="112"/>
        <end position="115"/>
    </location>
</feature>
<feature type="helix" evidence="10">
    <location>
        <begin position="33"/>
        <end position="36"/>
    </location>
</feature>
<feature type="helix" evidence="10">
    <location>
        <begin position="46"/>
        <end position="56"/>
    </location>
</feature>
<feature type="helix" evidence="10">
    <location>
        <begin position="61"/>
        <end position="69"/>
    </location>
</feature>
<feature type="strand" evidence="10">
    <location>
        <begin position="73"/>
        <end position="79"/>
    </location>
</feature>
<feature type="helix" evidence="10">
    <location>
        <begin position="81"/>
        <end position="83"/>
    </location>
</feature>
<feature type="helix" evidence="10">
    <location>
        <begin position="85"/>
        <end position="90"/>
    </location>
</feature>
<feature type="turn" evidence="10">
    <location>
        <begin position="99"/>
        <end position="102"/>
    </location>
</feature>
<feature type="helix" evidence="10">
    <location>
        <begin position="105"/>
        <end position="107"/>
    </location>
</feature>
<feature type="strand" evidence="10">
    <location>
        <begin position="109"/>
        <end position="119"/>
    </location>
</feature>
<feature type="strand" evidence="10">
    <location>
        <begin position="127"/>
        <end position="129"/>
    </location>
</feature>
<feature type="helix" evidence="10">
    <location>
        <begin position="134"/>
        <end position="146"/>
    </location>
</feature>
<feature type="strand" evidence="10">
    <location>
        <begin position="148"/>
        <end position="150"/>
    </location>
</feature>
<feature type="helix" evidence="10">
    <location>
        <begin position="151"/>
        <end position="153"/>
    </location>
</feature>
<feature type="helix" evidence="10">
    <location>
        <begin position="155"/>
        <end position="164"/>
    </location>
</feature>
<feature type="helix" evidence="10">
    <location>
        <begin position="166"/>
        <end position="169"/>
    </location>
</feature>
<feature type="turn" evidence="10">
    <location>
        <begin position="175"/>
        <end position="177"/>
    </location>
</feature>
<feature type="helix" evidence="10">
    <location>
        <begin position="179"/>
        <end position="192"/>
    </location>
</feature>
<feature type="helix" evidence="10">
    <location>
        <begin position="194"/>
        <end position="203"/>
    </location>
</feature>
<feature type="helix" evidence="10">
    <location>
        <begin position="205"/>
        <end position="214"/>
    </location>
</feature>
<gene>
    <name evidence="8" type="ORF">PAV_1c07830</name>
</gene>
<proteinExistence type="evidence at protein level"/>
<comment type="function">
    <text evidence="4">Zinc-dependent endoprotease with a unique preference for proline residues surrounding the scissile bond, which cleaves in a PLP-|-PVP motif. Cleaves the cell surface protein encoded by an adjacent gene, which contains two PPEP-2 cleaving sites and putative extracellular matrix-binding domains. Thereby, may have a role in the regulation of P.alvei adhesion. Is not able to cleave within the PVP-|-PVQ motif, and only shows a very poor cleavage of the VNP-|-PVP motif in vitro, which is the optimal substrate peptide for PPEP-1 from P.difficile.</text>
</comment>
<comment type="catalytic activity">
    <reaction evidence="4">
        <text>The enzyme catalyzes the hydrolytic cleavage of peptide bonds between two proline residues.</text>
        <dbReference type="EC" id="3.4.24.89"/>
    </reaction>
</comment>
<comment type="cofactor">
    <cofactor evidence="3 4">
        <name>Zn(2+)</name>
        <dbReference type="ChEBI" id="CHEBI:29105"/>
    </cofactor>
    <text evidence="3 4">Binds 1 zinc ion per subunit.</text>
</comment>
<comment type="biophysicochemical properties">
    <kinetics>
        <KM evidence="4">70 uM for a FRET peptide containing PLPPVP</KM>
        <KM evidence="4">330 uM for a FRET peptide containing VLPPVP</KM>
        <text evidence="4">kcat is 8 sec(-1) with a FRET peptide containing PLPPVP as substrate. kcat is 3 sec(-1) with a FRET peptide containing VLPPVP as substrate.</text>
    </kinetics>
</comment>
<comment type="subunit">
    <text evidence="4">Monomer.</text>
</comment>
<comment type="subcellular location">
    <subcellularLocation>
        <location evidence="4">Secreted</location>
    </subcellularLocation>
</comment>
<comment type="similarity">
    <text evidence="6">Belongs to the peptidase M34 family. Pro-Pro endopeptidase subfamily.</text>
</comment>
<organism>
    <name type="scientific">Paenibacillus alvei (strain ATCC 6344 / DSM 29 / NBRC 3343 / NCIMB 9371 / NCTC 6352)</name>
    <name type="common">Bacillus alvei</name>
    <dbReference type="NCBI Taxonomy" id="1206781"/>
    <lineage>
        <taxon>Bacteria</taxon>
        <taxon>Bacillati</taxon>
        <taxon>Bacillota</taxon>
        <taxon>Bacilli</taxon>
        <taxon>Bacillales</taxon>
        <taxon>Paenibacillaceae</taxon>
        <taxon>Paenibacillus</taxon>
    </lineage>
</organism>
<keyword id="KW-0002">3D-structure</keyword>
<keyword id="KW-0378">Hydrolase</keyword>
<keyword id="KW-0479">Metal-binding</keyword>
<keyword id="KW-0482">Metalloprotease</keyword>
<keyword id="KW-0645">Protease</keyword>
<keyword id="KW-0964">Secreted</keyword>
<keyword id="KW-0732">Signal</keyword>
<keyword id="KW-0862">Zinc</keyword>
<dbReference type="EC" id="3.4.24.89" evidence="4"/>
<dbReference type="EMBL" id="AMBZ01000001">
    <property type="protein sequence ID" value="EJW19796.1"/>
    <property type="molecule type" value="Genomic_DNA"/>
</dbReference>
<dbReference type="RefSeq" id="WP_005543643.1">
    <property type="nucleotide sequence ID" value="NZ_AMBZ01000001.1"/>
</dbReference>
<dbReference type="PDB" id="6FPC">
    <property type="method" value="X-ray"/>
    <property type="resolution" value="1.75 A"/>
    <property type="chains" value="A/B/C/D=28-217"/>
</dbReference>
<dbReference type="PDBsum" id="6FPC"/>
<dbReference type="SMR" id="K4ZRC1"/>
<dbReference type="MEROPS" id="M34.003"/>
<dbReference type="GeneID" id="94487735"/>
<dbReference type="PATRIC" id="fig|1206781.3.peg.795"/>
<dbReference type="BRENDA" id="3.4.24.89">
    <property type="organism ID" value="629"/>
</dbReference>
<dbReference type="SABIO-RK" id="K4ZRC1"/>
<dbReference type="GO" id="GO:0005576">
    <property type="term" value="C:extracellular region"/>
    <property type="evidence" value="ECO:0007669"/>
    <property type="project" value="UniProtKB-SubCell"/>
</dbReference>
<dbReference type="GO" id="GO:0046872">
    <property type="term" value="F:metal ion binding"/>
    <property type="evidence" value="ECO:0007669"/>
    <property type="project" value="UniProtKB-KW"/>
</dbReference>
<dbReference type="GO" id="GO:0008237">
    <property type="term" value="F:metallopeptidase activity"/>
    <property type="evidence" value="ECO:0007669"/>
    <property type="project" value="UniProtKB-KW"/>
</dbReference>
<dbReference type="GO" id="GO:0006508">
    <property type="term" value="P:proteolysis"/>
    <property type="evidence" value="ECO:0007669"/>
    <property type="project" value="UniProtKB-KW"/>
</dbReference>
<dbReference type="CDD" id="cd20183">
    <property type="entry name" value="M34_PPEP"/>
    <property type="match status" value="1"/>
</dbReference>
<dbReference type="Gene3D" id="3.40.390.10">
    <property type="entry name" value="Collagenase (Catalytic Domain)"/>
    <property type="match status" value="1"/>
</dbReference>
<dbReference type="InterPro" id="IPR014781">
    <property type="entry name" value="Anthrax_toxin_lethal/edema_N/C"/>
</dbReference>
<dbReference type="InterPro" id="IPR047568">
    <property type="entry name" value="ATLF-like_dom"/>
</dbReference>
<dbReference type="InterPro" id="IPR024079">
    <property type="entry name" value="MetalloPept_cat_dom_sf"/>
</dbReference>
<dbReference type="Pfam" id="PF07737">
    <property type="entry name" value="ATLF"/>
    <property type="match status" value="1"/>
</dbReference>
<dbReference type="SUPFAM" id="SSF55486">
    <property type="entry name" value="Metalloproteases ('zincins'), catalytic domain"/>
    <property type="match status" value="1"/>
</dbReference>
<dbReference type="PROSITE" id="PS51995">
    <property type="entry name" value="ATLF"/>
    <property type="match status" value="1"/>
</dbReference>
<protein>
    <recommendedName>
        <fullName evidence="5">Pro-Pro endopeptidase</fullName>
        <shortName evidence="5">PPEP-2</shortName>
        <ecNumber evidence="4">3.4.24.89</ecNumber>
    </recommendedName>
</protein>